<keyword id="KW-1003">Cell membrane</keyword>
<keyword id="KW-0406">Ion transport</keyword>
<keyword id="KW-0472">Membrane</keyword>
<keyword id="KW-0533">Nickel</keyword>
<keyword id="KW-0921">Nickel transport</keyword>
<keyword id="KW-0812">Transmembrane</keyword>
<keyword id="KW-1133">Transmembrane helix</keyword>
<keyword id="KW-0813">Transport</keyword>
<accession>Q5HG38</accession>
<organism>
    <name type="scientific">Staphylococcus aureus (strain COL)</name>
    <dbReference type="NCBI Taxonomy" id="93062"/>
    <lineage>
        <taxon>Bacteria</taxon>
        <taxon>Bacillati</taxon>
        <taxon>Bacillota</taxon>
        <taxon>Bacilli</taxon>
        <taxon>Bacillales</taxon>
        <taxon>Staphylococcaceae</taxon>
        <taxon>Staphylococcus</taxon>
    </lineage>
</organism>
<protein>
    <recommendedName>
        <fullName evidence="1">Nickel import system permease protein NikB</fullName>
    </recommendedName>
</protein>
<feature type="chain" id="PRO_0000276775" description="Nickel import system permease protein NikB">
    <location>
        <begin position="1"/>
        <end position="328"/>
    </location>
</feature>
<feature type="transmembrane region" description="Helical" evidence="2">
    <location>
        <begin position="11"/>
        <end position="31"/>
    </location>
</feature>
<feature type="transmembrane region" description="Helical" evidence="2">
    <location>
        <begin position="104"/>
        <end position="124"/>
    </location>
</feature>
<feature type="transmembrane region" description="Helical" evidence="2">
    <location>
        <begin position="139"/>
        <end position="159"/>
    </location>
</feature>
<feature type="transmembrane region" description="Helical" evidence="2">
    <location>
        <begin position="170"/>
        <end position="190"/>
    </location>
</feature>
<feature type="transmembrane region" description="Helical" evidence="2">
    <location>
        <begin position="229"/>
        <end position="249"/>
    </location>
</feature>
<feature type="transmembrane region" description="Helical" evidence="2">
    <location>
        <begin position="279"/>
        <end position="299"/>
    </location>
</feature>
<feature type="domain" description="ABC transmembrane type-1" evidence="2">
    <location>
        <begin position="100"/>
        <end position="297"/>
    </location>
</feature>
<comment type="function">
    <text evidence="1">Part of the ABC transporter complex NikABCDE (Opp2) involved in nickel import. Probably responsible for the translocation of the substrate across the membrane.</text>
</comment>
<comment type="subunit">
    <text evidence="1">The complex is composed of two ATP-binding proteins (NikD and NikE), two transmembrane proteins (NikB and NikC) and a solute-binding protein (NikA).</text>
</comment>
<comment type="subcellular location">
    <subcellularLocation>
        <location evidence="3">Cell membrane</location>
        <topology evidence="2">Multi-pass membrane protein</topology>
    </subcellularLocation>
</comment>
<comment type="similarity">
    <text evidence="3">Belongs to the binding-protein-dependent transport system permease family. OppBC subfamily.</text>
</comment>
<proteinExistence type="inferred from homology"/>
<sequence length="328" mass="36814">MFIIKSMLYRLMQMIVVLFVISTLTFILMKLSPGNPVDKILHLDVAQVSTEQINATKDKLGLNDSLLVQWWHWMNHLLHFNLGKSFESKEPVTQILFNYAPITLLISFSTLVVSLCISIPLGIIAAKRFHKWTDKVIRVISTLSISLPAFFIGIILLFIVTNLMNIDSVILSQFILPVITLSLGMCAYIIRLVRSNLLMLLQSNIVQASRLRGMNERYILIHDLLKPTILPIIPLLGISLGSLIGGTVVIENLFDIPGIGYLLMDSIKSRDYPVIQGCVLFIGFFVVIINTIADLLTLLLDPKQRLQLGNPKIKTNTPLISESSDRHA</sequence>
<evidence type="ECO:0000250" key="1">
    <source>
        <dbReference type="UniProtKB" id="Q2FYQ5"/>
    </source>
</evidence>
<evidence type="ECO:0000255" key="2">
    <source>
        <dbReference type="PROSITE-ProRule" id="PRU00441"/>
    </source>
</evidence>
<evidence type="ECO:0000305" key="3"/>
<name>NIKB_STAAC</name>
<gene>
    <name evidence="1" type="primary">nikB</name>
    <name type="synonym">oppB2</name>
    <name type="ordered locus">SACOL1417</name>
</gene>
<reference key="1">
    <citation type="journal article" date="2005" name="J. Bacteriol.">
        <title>Insights on evolution of virulence and resistance from the complete genome analysis of an early methicillin-resistant Staphylococcus aureus strain and a biofilm-producing methicillin-resistant Staphylococcus epidermidis strain.</title>
        <authorList>
            <person name="Gill S.R."/>
            <person name="Fouts D.E."/>
            <person name="Archer G.L."/>
            <person name="Mongodin E.F."/>
            <person name="DeBoy R.T."/>
            <person name="Ravel J."/>
            <person name="Paulsen I.T."/>
            <person name="Kolonay J.F."/>
            <person name="Brinkac L.M."/>
            <person name="Beanan M.J."/>
            <person name="Dodson R.J."/>
            <person name="Daugherty S.C."/>
            <person name="Madupu R."/>
            <person name="Angiuoli S.V."/>
            <person name="Durkin A.S."/>
            <person name="Haft D.H."/>
            <person name="Vamathevan J.J."/>
            <person name="Khouri H."/>
            <person name="Utterback T.R."/>
            <person name="Lee C."/>
            <person name="Dimitrov G."/>
            <person name="Jiang L."/>
            <person name="Qin H."/>
            <person name="Weidman J."/>
            <person name="Tran K."/>
            <person name="Kang K.H."/>
            <person name="Hance I.R."/>
            <person name="Nelson K.E."/>
            <person name="Fraser C.M."/>
        </authorList>
    </citation>
    <scope>NUCLEOTIDE SEQUENCE [LARGE SCALE GENOMIC DNA]</scope>
    <source>
        <strain>COL</strain>
    </source>
</reference>
<dbReference type="EMBL" id="CP000046">
    <property type="protein sequence ID" value="AAW38162.1"/>
    <property type="molecule type" value="Genomic_DNA"/>
</dbReference>
<dbReference type="RefSeq" id="WP_000469949.1">
    <property type="nucleotide sequence ID" value="NZ_JBGOFO010000003.1"/>
</dbReference>
<dbReference type="SMR" id="Q5HG38"/>
<dbReference type="KEGG" id="sac:SACOL1417"/>
<dbReference type="HOGENOM" id="CLU_036879_0_2_9"/>
<dbReference type="Proteomes" id="UP000000530">
    <property type="component" value="Chromosome"/>
</dbReference>
<dbReference type="GO" id="GO:0005886">
    <property type="term" value="C:plasma membrane"/>
    <property type="evidence" value="ECO:0007669"/>
    <property type="project" value="UniProtKB-SubCell"/>
</dbReference>
<dbReference type="GO" id="GO:0015099">
    <property type="term" value="F:nickel cation transmembrane transporter activity"/>
    <property type="evidence" value="ECO:0007669"/>
    <property type="project" value="InterPro"/>
</dbReference>
<dbReference type="CDD" id="cd06261">
    <property type="entry name" value="TM_PBP2"/>
    <property type="match status" value="1"/>
</dbReference>
<dbReference type="Gene3D" id="1.10.3720.10">
    <property type="entry name" value="MetI-like"/>
    <property type="match status" value="1"/>
</dbReference>
<dbReference type="InterPro" id="IPR045621">
    <property type="entry name" value="BPD_transp_1_N"/>
</dbReference>
<dbReference type="InterPro" id="IPR000515">
    <property type="entry name" value="MetI-like"/>
</dbReference>
<dbReference type="InterPro" id="IPR035906">
    <property type="entry name" value="MetI-like_sf"/>
</dbReference>
<dbReference type="InterPro" id="IPR050045">
    <property type="entry name" value="Opp2B"/>
</dbReference>
<dbReference type="NCBIfam" id="NF045470">
    <property type="entry name" value="Opp2B"/>
    <property type="match status" value="1"/>
</dbReference>
<dbReference type="PANTHER" id="PTHR43163">
    <property type="entry name" value="DIPEPTIDE TRANSPORT SYSTEM PERMEASE PROTEIN DPPB-RELATED"/>
    <property type="match status" value="1"/>
</dbReference>
<dbReference type="PANTHER" id="PTHR43163:SF6">
    <property type="entry name" value="DIPEPTIDE TRANSPORT SYSTEM PERMEASE PROTEIN DPPB-RELATED"/>
    <property type="match status" value="1"/>
</dbReference>
<dbReference type="Pfam" id="PF00528">
    <property type="entry name" value="BPD_transp_1"/>
    <property type="match status" value="1"/>
</dbReference>
<dbReference type="Pfam" id="PF19300">
    <property type="entry name" value="BPD_transp_1_N"/>
    <property type="match status" value="1"/>
</dbReference>
<dbReference type="SUPFAM" id="SSF161098">
    <property type="entry name" value="MetI-like"/>
    <property type="match status" value="1"/>
</dbReference>
<dbReference type="PROSITE" id="PS50928">
    <property type="entry name" value="ABC_TM1"/>
    <property type="match status" value="1"/>
</dbReference>